<proteinExistence type="evidence at protein level"/>
<feature type="chain" id="PRO_0000160580" description="Cell division protein FtsQ">
    <location>
        <begin position="1"/>
        <end position="276"/>
    </location>
</feature>
<feature type="topological domain" description="Cytoplasmic" evidence="1">
    <location>
        <begin position="1"/>
        <end position="27"/>
    </location>
</feature>
<feature type="transmembrane region" description="Helical" evidence="1">
    <location>
        <begin position="28"/>
        <end position="48"/>
    </location>
</feature>
<feature type="topological domain" description="Periplasmic" evidence="1">
    <location>
        <begin position="49"/>
        <end position="276"/>
    </location>
</feature>
<feature type="domain" description="POTRA" evidence="2">
    <location>
        <begin position="55"/>
        <end position="126"/>
    </location>
</feature>
<feature type="region of interest" description="Disordered" evidence="3">
    <location>
        <begin position="255"/>
        <end position="276"/>
    </location>
</feature>
<feature type="compositionally biased region" description="Low complexity" evidence="3">
    <location>
        <begin position="266"/>
        <end position="276"/>
    </location>
</feature>
<feature type="mutagenesis site" description="No change in activity. Correctly assembled, interacts with FtsB and FtsL, but fails to localize efficiently to the cell division site; when associated with R-32. Does not insert into the membrane and lack of activity; when associated with R-32 and P-38." evidence="10">
    <original>L</original>
    <variation>R</variation>
    <location>
        <position position="29"/>
    </location>
</feature>
<feature type="mutagenesis site" description="No change in activity. Correctly assembled, interacts with FtsB and FtsL, but fails to localize efficiently to the cell division site; when associated with R-29. Does not insert into the membrane and lack of activity; when associated with R-29 and P-38." evidence="10">
    <original>L</original>
    <variation>R</variation>
    <location>
        <position position="32"/>
    </location>
</feature>
<feature type="mutagenesis site" description="No change in activity. Does not insert into the membrane and lack of activity; when associated with R-29 and R-32." evidence="10">
    <original>V</original>
    <variation>P</variation>
    <location>
        <position position="38"/>
    </location>
</feature>
<feature type="mutagenesis site" description="Does not affect localization." evidence="11">
    <original>D</original>
    <variation>K</variation>
    <variation>Q</variation>
    <location>
        <position position="91"/>
    </location>
</feature>
<feature type="mutagenesis site" description="Impairs localization." evidence="11">
    <original>K</original>
    <variation>D</variation>
    <location>
        <position position="113"/>
    </location>
</feature>
<feature type="mutagenesis site" description="Impairs localization." evidence="11">
    <original>E</original>
    <variation>K</variation>
    <location>
        <position position="125"/>
    </location>
</feature>
<feature type="mutagenesis site" description="Localizes to mid-cell, but is unable to form a functional complex with FtsL/FtsB." evidence="11">
    <original>D</original>
    <variation>N</variation>
    <location>
        <position position="237"/>
    </location>
</feature>
<feature type="helix" evidence="21">
    <location>
        <begin position="23"/>
        <end position="50"/>
    </location>
</feature>
<feature type="strand" evidence="21">
    <location>
        <begin position="53"/>
        <end position="55"/>
    </location>
</feature>
<feature type="strand" evidence="19">
    <location>
        <begin position="59"/>
        <end position="65"/>
    </location>
</feature>
<feature type="helix" evidence="19">
    <location>
        <begin position="71"/>
        <end position="79"/>
    </location>
</feature>
<feature type="strand" evidence="18">
    <location>
        <begin position="81"/>
        <end position="83"/>
    </location>
</feature>
<feature type="helix" evidence="17">
    <location>
        <begin position="87"/>
        <end position="89"/>
    </location>
</feature>
<feature type="helix" evidence="19">
    <location>
        <begin position="92"/>
        <end position="102"/>
    </location>
</feature>
<feature type="strand" evidence="19">
    <location>
        <begin position="106"/>
        <end position="114"/>
    </location>
</feature>
<feature type="turn" evidence="19">
    <location>
        <begin position="115"/>
        <end position="117"/>
    </location>
</feature>
<feature type="strand" evidence="19">
    <location>
        <begin position="118"/>
        <end position="125"/>
    </location>
</feature>
<feature type="strand" evidence="19">
    <location>
        <begin position="129"/>
        <end position="132"/>
    </location>
</feature>
<feature type="turn" evidence="19">
    <location>
        <begin position="133"/>
        <end position="135"/>
    </location>
</feature>
<feature type="strand" evidence="19">
    <location>
        <begin position="136"/>
        <end position="138"/>
    </location>
</feature>
<feature type="strand" evidence="20">
    <location>
        <begin position="144"/>
        <end position="146"/>
    </location>
</feature>
<feature type="helix" evidence="19">
    <location>
        <begin position="149"/>
        <end position="151"/>
    </location>
</feature>
<feature type="turn" evidence="19">
    <location>
        <begin position="152"/>
        <end position="154"/>
    </location>
</feature>
<feature type="strand" evidence="19">
    <location>
        <begin position="159"/>
        <end position="161"/>
    </location>
</feature>
<feature type="turn" evidence="18">
    <location>
        <begin position="164"/>
        <end position="166"/>
    </location>
</feature>
<feature type="helix" evidence="19">
    <location>
        <begin position="167"/>
        <end position="182"/>
    </location>
</feature>
<feature type="turn" evidence="19">
    <location>
        <begin position="183"/>
        <end position="185"/>
    </location>
</feature>
<feature type="strand" evidence="19">
    <location>
        <begin position="188"/>
        <end position="193"/>
    </location>
</feature>
<feature type="strand" evidence="17">
    <location>
        <begin position="195"/>
        <end position="197"/>
    </location>
</feature>
<feature type="strand" evidence="19">
    <location>
        <begin position="199"/>
        <end position="203"/>
    </location>
</feature>
<feature type="strand" evidence="17">
    <location>
        <begin position="204"/>
        <end position="206"/>
    </location>
</feature>
<feature type="strand" evidence="19">
    <location>
        <begin position="208"/>
        <end position="212"/>
    </location>
</feature>
<feature type="helix" evidence="19">
    <location>
        <begin position="216"/>
        <end position="236"/>
    </location>
</feature>
<feature type="strand" evidence="19">
    <location>
        <begin position="239"/>
        <end position="245"/>
    </location>
</feature>
<feature type="strand" evidence="19">
    <location>
        <begin position="248"/>
        <end position="258"/>
    </location>
</feature>
<name>FTSQ_ECOLI</name>
<gene>
    <name evidence="1" type="primary">ftsQ</name>
    <name type="ordered locus">b0093</name>
    <name type="ordered locus">JW0091</name>
</gene>
<organism>
    <name type="scientific">Escherichia coli (strain K12)</name>
    <dbReference type="NCBI Taxonomy" id="83333"/>
    <lineage>
        <taxon>Bacteria</taxon>
        <taxon>Pseudomonadati</taxon>
        <taxon>Pseudomonadota</taxon>
        <taxon>Gammaproteobacteria</taxon>
        <taxon>Enterobacterales</taxon>
        <taxon>Enterobacteriaceae</taxon>
        <taxon>Escherichia</taxon>
    </lineage>
</organism>
<accession>P06136</accession>
<evidence type="ECO:0000255" key="1">
    <source>
        <dbReference type="HAMAP-Rule" id="MF_00911"/>
    </source>
</evidence>
<evidence type="ECO:0000255" key="2">
    <source>
        <dbReference type="PROSITE-ProRule" id="PRU01115"/>
    </source>
</evidence>
<evidence type="ECO:0000256" key="3">
    <source>
        <dbReference type="SAM" id="MobiDB-lite"/>
    </source>
</evidence>
<evidence type="ECO:0000269" key="4">
    <source>
    </source>
</evidence>
<evidence type="ECO:0000269" key="5">
    <source>
    </source>
</evidence>
<evidence type="ECO:0000269" key="6">
    <source>
    </source>
</evidence>
<evidence type="ECO:0000269" key="7">
    <source>
    </source>
</evidence>
<evidence type="ECO:0000269" key="8">
    <source>
    </source>
</evidence>
<evidence type="ECO:0000269" key="9">
    <source>
    </source>
</evidence>
<evidence type="ECO:0000269" key="10">
    <source>
    </source>
</evidence>
<evidence type="ECO:0000269" key="11">
    <source>
    </source>
</evidence>
<evidence type="ECO:0000269" key="12">
    <source>
    </source>
</evidence>
<evidence type="ECO:0000269" key="13">
    <source>
    </source>
</evidence>
<evidence type="ECO:0000269" key="14">
    <source>
    </source>
</evidence>
<evidence type="ECO:0000269" key="15">
    <source>
    </source>
</evidence>
<evidence type="ECO:0000269" key="16">
    <source>
    </source>
</evidence>
<evidence type="ECO:0007829" key="17">
    <source>
        <dbReference type="PDB" id="2VH1"/>
    </source>
</evidence>
<evidence type="ECO:0007829" key="18">
    <source>
        <dbReference type="PDB" id="5Z2W"/>
    </source>
</evidence>
<evidence type="ECO:0007829" key="19">
    <source>
        <dbReference type="PDB" id="6H9N"/>
    </source>
</evidence>
<evidence type="ECO:0007829" key="20">
    <source>
        <dbReference type="PDB" id="6H9O"/>
    </source>
</evidence>
<evidence type="ECO:0007829" key="21">
    <source>
        <dbReference type="PDB" id="8HHF"/>
    </source>
</evidence>
<reference key="1">
    <citation type="journal article" date="1985" name="J. Mol. Biol.">
        <title>Structure and expression of the cell division genes ftsQ, ftsA and ftsZ.</title>
        <authorList>
            <person name="Yi Q.-M."/>
            <person name="Rockenbach S."/>
            <person name="Ward J.E. Jr."/>
            <person name="Lutkenhaus J."/>
        </authorList>
    </citation>
    <scope>NUCLEOTIDE SEQUENCE [GENOMIC DNA]</scope>
    <source>
        <strain>K12</strain>
    </source>
</reference>
<reference key="2">
    <citation type="journal article" date="1984" name="J. Bacteriol.">
        <title>DNA sequence and transcriptional organization of essential cell division genes ftsQ and ftsA of Escherichia coli: evidence for overlapping transcriptional units.</title>
        <authorList>
            <person name="Robinson A.C."/>
            <person name="Kenan D.J."/>
            <person name="Hatfull G.F."/>
            <person name="Sullivan N.F."/>
            <person name="Spiegelberg R."/>
            <person name="Donachie W.D."/>
        </authorList>
    </citation>
    <scope>NUCLEOTIDE SEQUENCE [GENOMIC DNA]</scope>
    <source>
        <strain>K12</strain>
    </source>
</reference>
<reference key="3">
    <citation type="journal article" date="1990" name="J. Bacteriol.">
        <title>Regulation of expression of the ftsA cell division gene by sequences in upstream genes.</title>
        <authorList>
            <person name="Dewar S.J."/>
            <person name="Donachie W.D."/>
        </authorList>
    </citation>
    <scope>NUCLEOTIDE SEQUENCE [GENOMIC DNA]</scope>
</reference>
<reference key="4">
    <citation type="journal article" date="1992" name="Nucleic Acids Res.">
        <title>Systematic sequencing of the Escherichia coli genome: analysis of the 0-2.4 min region.</title>
        <authorList>
            <person name="Yura T."/>
            <person name="Mori H."/>
            <person name="Nagai H."/>
            <person name="Nagata T."/>
            <person name="Ishihama A."/>
            <person name="Fujita N."/>
            <person name="Isono K."/>
            <person name="Mizobuchi K."/>
            <person name="Nakata A."/>
        </authorList>
    </citation>
    <scope>NUCLEOTIDE SEQUENCE [LARGE SCALE GENOMIC DNA]</scope>
    <source>
        <strain>K12</strain>
    </source>
</reference>
<reference key="5">
    <citation type="journal article" date="1997" name="Science">
        <title>The complete genome sequence of Escherichia coli K-12.</title>
        <authorList>
            <person name="Blattner F.R."/>
            <person name="Plunkett G. III"/>
            <person name="Bloch C.A."/>
            <person name="Perna N.T."/>
            <person name="Burland V."/>
            <person name="Riley M."/>
            <person name="Collado-Vides J."/>
            <person name="Glasner J.D."/>
            <person name="Rode C.K."/>
            <person name="Mayhew G.F."/>
            <person name="Gregor J."/>
            <person name="Davis N.W."/>
            <person name="Kirkpatrick H.A."/>
            <person name="Goeden M.A."/>
            <person name="Rose D.J."/>
            <person name="Mau B."/>
            <person name="Shao Y."/>
        </authorList>
    </citation>
    <scope>NUCLEOTIDE SEQUENCE [LARGE SCALE GENOMIC DNA]</scope>
    <source>
        <strain>K12 / MG1655 / ATCC 47076</strain>
    </source>
</reference>
<reference key="6">
    <citation type="journal article" date="2006" name="Mol. Syst. Biol.">
        <title>Highly accurate genome sequences of Escherichia coli K-12 strains MG1655 and W3110.</title>
        <authorList>
            <person name="Hayashi K."/>
            <person name="Morooka N."/>
            <person name="Yamamoto Y."/>
            <person name="Fujita K."/>
            <person name="Isono K."/>
            <person name="Choi S."/>
            <person name="Ohtsubo E."/>
            <person name="Baba T."/>
            <person name="Wanner B.L."/>
            <person name="Mori H."/>
            <person name="Horiuchi T."/>
        </authorList>
    </citation>
    <scope>NUCLEOTIDE SEQUENCE [LARGE SCALE GENOMIC DNA]</scope>
    <source>
        <strain>K12 / W3110 / ATCC 27325 / DSM 5911</strain>
    </source>
</reference>
<reference key="7">
    <citation type="journal article" date="1986" name="J. Bacteriol.">
        <title>Further evidence for overlapping transcriptional units in an Escherichia coli cell envelope-cell division gene cluster: DNA sequence and transcriptional organization of the ddl ftsQ region.</title>
        <authorList>
            <person name="Robinson A.C."/>
            <person name="Kenan D.J."/>
            <person name="Sweeney J."/>
            <person name="Donachie W.D."/>
        </authorList>
    </citation>
    <scope>NUCLEOTIDE SEQUENCE [GENOMIC DNA] OF 1-28</scope>
    <source>
        <strain>K12</strain>
    </source>
</reference>
<reference key="8">
    <citation type="journal article" date="1991" name="J. Bacteriol.">
        <title>The FtsQ protein of Escherichia coli: membrane topology, abundance, and cell division phenotypes due to overproduction and insertion mutations.</title>
        <authorList>
            <person name="Carson M.J."/>
            <person name="Barondess J."/>
            <person name="Beckwith J."/>
        </authorList>
    </citation>
    <scope>SUBCELLULAR LOCATION</scope>
    <scope>TOPOLOGY</scope>
</reference>
<reference key="9">
    <citation type="journal article" date="1998" name="J. Bacteriol.">
        <title>Localization of cell division protein FtsQ by immunofluorescence microscopy in dividing and nondividing cells of Escherichia coli.</title>
        <authorList>
            <person name="Buddelmeijer N."/>
            <person name="Aarsman M.E."/>
            <person name="Kolk A.H."/>
            <person name="Vicente M."/>
            <person name="Nanninga N."/>
        </authorList>
    </citation>
    <scope>SUBCELLULAR LOCATION</scope>
    <scope>DOMAIN</scope>
</reference>
<reference key="10">
    <citation type="journal article" date="1999" name="J. Bacteriol.">
        <title>Septal localization of FtsQ, an essential cell division protein in Escherichia coli.</title>
        <authorList>
            <person name="Chen J.C."/>
            <person name="Weiss D.S."/>
            <person name="Ghigo J.M."/>
            <person name="Beckwith J."/>
        </authorList>
    </citation>
    <scope>SUBCELLULAR LOCATION</scope>
    <scope>DOMAIN</scope>
</reference>
<reference key="11">
    <citation type="journal article" date="2001" name="EMBO Rep.">
        <title>Sec-dependent membrane protein insertion: sequential interaction of nascent FtsQ with SecY and YidC.</title>
        <authorList>
            <person name="Urbanus M.L."/>
            <person name="Scotti P.A."/>
            <person name="Froderberg L."/>
            <person name="Saaf A."/>
            <person name="de Gier J.W."/>
            <person name="Brunner J."/>
            <person name="Samuelson J.C."/>
            <person name="Dalbey R.E."/>
            <person name="Oudega B."/>
            <person name="Luirink J."/>
        </authorList>
    </citation>
    <scope>SUBCELLULAR LOCATION</scope>
</reference>
<reference key="12">
    <citation type="journal article" date="2001" name="Mol. Microbiol.">
        <title>FtsQ, FtsL and FtsI require FtsK, but not FtsN, for co-localization with FtsZ during Escherichia coli cell division.</title>
        <authorList>
            <person name="Chen J.C."/>
            <person name="Beckwith J."/>
        </authorList>
    </citation>
    <scope>SUBCELLULAR LOCATION</scope>
    <source>
        <strain>K12 / MC4100 / ATCC 35695 / DSM 6574</strain>
    </source>
</reference>
<reference key="13">
    <citation type="journal article" date="2002" name="J. Bacteriol.">
        <title>ZipA is required for recruitment of FtsK, FtsQ, FtsL, and FtsN to the septal ring in Escherichia coli.</title>
        <authorList>
            <person name="Hale C.A."/>
            <person name="de Boer P.A.J."/>
        </authorList>
    </citation>
    <scope>SUBCELLULAR LOCATION</scope>
</reference>
<reference key="14">
    <citation type="journal article" date="2004" name="Mol. Microbiol.">
        <title>A complex of the Escherichia coli cell division proteins FtsL, FtsB and FtsQ forms independently of its localization to the septal region.</title>
        <authorList>
            <person name="Buddelmeijer N."/>
            <person name="Beckwith J."/>
        </authorList>
    </citation>
    <scope>SUBUNIT</scope>
    <scope>INTERACTION WITH FTSL AND FTSB</scope>
    <scope>SUBCELLULAR LOCATION</scope>
    <source>
        <strain>K12 / MC4100 / ATCC 35695 / DSM 6574</strain>
    </source>
</reference>
<reference key="15">
    <citation type="journal article" date="2005" name="J. Bacteriol.">
        <title>Interaction network among Escherichia coli membrane proteins involved in cell division as revealed by bacterial two-hybrid analysis.</title>
        <authorList>
            <person name="Karimova G."/>
            <person name="Dautin N."/>
            <person name="Ladant D."/>
        </authorList>
    </citation>
    <scope>INTERACTION WITH FTSL; FTSA; FTSI; FTSN; FTSX AND YMGF</scope>
    <source>
        <strain>K12</strain>
    </source>
</reference>
<reference key="16">
    <citation type="journal article" date="2007" name="J. Bacteriol.">
        <title>Contribution of the FtsQ transmembrane segment to localization to the cell division site.</title>
        <authorList>
            <person name="Scheffers D.J."/>
            <person name="Robichon C."/>
            <person name="Haan G.J."/>
            <person name="den Blaauwen T."/>
            <person name="Koningstein G."/>
            <person name="van Bloois E."/>
            <person name="Beckwith J."/>
            <person name="Luirink J."/>
        </authorList>
    </citation>
    <scope>SUBCELLULAR LOCATION</scope>
    <scope>DOMAIN</scope>
    <scope>MUTAGENESIS OF LEU-29; LEU-32 AND VAL-38</scope>
    <source>
        <strain>K12 / MC4100 / ATCC 35695 / DSM 6574</strain>
    </source>
</reference>
<reference key="17">
    <citation type="journal article" date="2007" name="Microbiology">
        <title>Three functional subdomains of the Escherichia coli FtsQ protein are involved in its interaction with the other division proteins.</title>
        <authorList>
            <person name="D'Ulisse V."/>
            <person name="Fagioli M."/>
            <person name="Ghelardini P."/>
            <person name="Paolozzi L."/>
        </authorList>
    </citation>
    <scope>FUNCTION</scope>
    <scope>SUBUNIT</scope>
    <scope>DOMAIN</scope>
    <scope>INTERACTION WITH FTSK; FTSW; FTSI AND FTSN</scope>
    <source>
        <strain>K12</strain>
    </source>
</reference>
<reference key="18">
    <citation type="journal article" date="2009" name="J. Bacteriol.">
        <title>Divisome under construction: distinct domains of the small membrane protein FtsB are necessary for interaction with multiple cell division proteins.</title>
        <authorList>
            <person name="Gonzalez M.D."/>
            <person name="Beckwith J."/>
        </authorList>
    </citation>
    <scope>FUNCTION</scope>
    <scope>SUBUNIT</scope>
    <scope>INTERACTION WITH FTSB</scope>
    <source>
        <strain>K12 / MC4100 / ATCC 35695 / DSM 6574</strain>
    </source>
</reference>
<reference key="19">
    <citation type="journal article" date="2009" name="Mol. Cell">
        <title>Hydroxyurea induces hydroxyl radical-mediated cell death in Escherichia coli.</title>
        <authorList>
            <person name="Davies B.W."/>
            <person name="Kohanski M.A."/>
            <person name="Simmons L.A."/>
            <person name="Winkler J.A."/>
            <person name="Collins J.J."/>
            <person name="Walker G.C."/>
        </authorList>
    </citation>
    <scope>INDUCTION BY HYDROXYUREA</scope>
    <source>
        <strain>K12 / MC4100 / ATCC 35695 / DSM 6574</strain>
    </source>
</reference>
<reference key="20">
    <citation type="journal article" date="2011" name="BMC Struct. Biol.">
        <title>A model for the Escherichia coli FtsB/FtsL/FtsQ cell division complex.</title>
        <authorList>
            <person name="Villanelo F."/>
            <person name="Ordenes A."/>
            <person name="Brunet J."/>
            <person name="Lagos R."/>
            <person name="Monasterio O."/>
        </authorList>
    </citation>
    <scope>3D-STRUCTURE MODELING OF THE FTSB/FTSL/FTSQ COMPLEX</scope>
</reference>
<reference key="21">
    <citation type="journal article" date="2008" name="Mol. Microbiol.">
        <title>Structural and mutational analysis of the cell division protein FtsQ.</title>
        <authorList>
            <person name="van den Ent F."/>
            <person name="Vinkenvleugel T.M."/>
            <person name="Ind A."/>
            <person name="West P."/>
            <person name="Veprintsev D."/>
            <person name="Nanninga N."/>
            <person name="den Blaauwen T."/>
            <person name="Lowe J."/>
        </authorList>
    </citation>
    <scope>X-RAY CRYSTALLOGRAPHY (2.7 ANGSTROMS) OF 58-276</scope>
    <scope>DOMAIN</scope>
    <scope>MUTAGENESIS OF ASP-91; LYS-113; GLU-125 AND ASP-237</scope>
</reference>
<reference key="22">
    <citation type="journal article" date="2011" name="Nat. Struct. Mol. Biol.">
        <title>Cryo-EM structure of the ribosome-SecYE complex in the membrane environment.</title>
        <authorList>
            <person name="Frauenfeld J."/>
            <person name="Gumbart J."/>
            <person name="Sluis E.O."/>
            <person name="Funes S."/>
            <person name="Gartmann M."/>
            <person name="Beatrix B."/>
            <person name="Mielke T."/>
            <person name="Berninghausen O."/>
            <person name="Becker T."/>
            <person name="Schulten K."/>
            <person name="Beckmann R."/>
        </authorList>
    </citation>
    <scope>STRUCTURE BY NMR OF 22-103</scope>
</reference>
<comment type="function">
    <text evidence="1 9 12">Essential cell division protein. May link together the upstream cell division proteins, which are predominantly cytoplasmic, with the downstream cell division proteins, which are predominantly periplasmic. May control correct divisome assembly.</text>
</comment>
<comment type="subunit">
    <text evidence="1 7 8 9 12">Part of a complex composed of FtsB, FtsL and FtsQ. The complex can be formed before its localization to the division site. This tripartite complex can be divided further into a subcomplex of FtsB and FtsL, which forms in the absence of FtsQ. Interacts with FtsA, FtsK, FtsL, FtsB, FtsW, FtsI, FtsN, FtsX and YmgF.</text>
</comment>
<comment type="interaction">
    <interactant intactId="EBI-1130157">
        <id>P06136</id>
    </interactant>
    <interactant intactId="EBI-1113953">
        <id>P0A6S5</id>
        <label>ftsB</label>
    </interactant>
    <organismsDiffer>false</organismsDiffer>
    <experiments>10</experiments>
</comment>
<comment type="interaction">
    <interactant intactId="EBI-1130157">
        <id>P06136</id>
    </interactant>
    <interactant intactId="EBI-548564">
        <id>P0AD68</id>
        <label>ftsI</label>
    </interactant>
    <organismsDiffer>false</organismsDiffer>
    <experiments>5</experiments>
</comment>
<comment type="interaction">
    <interactant intactId="EBI-1130157">
        <id>P06136</id>
    </interactant>
    <interactant intactId="EBI-550795">
        <id>P46889</id>
        <label>ftsK</label>
    </interactant>
    <organismsDiffer>false</organismsDiffer>
    <experiments>3</experiments>
</comment>
<comment type="interaction">
    <interactant intactId="EBI-1130157">
        <id>P06136</id>
    </interactant>
    <interactant intactId="EBI-1119082">
        <id>P0AEN4</id>
        <label>ftsL</label>
    </interactant>
    <organismsDiffer>false</organismsDiffer>
    <experiments>12</experiments>
</comment>
<comment type="interaction">
    <interactant intactId="EBI-1130157">
        <id>P06136</id>
    </interactant>
    <interactant intactId="EBI-1134233">
        <id>P29131</id>
        <label>ftsN</label>
    </interactant>
    <organismsDiffer>false</organismsDiffer>
    <experiments>7</experiments>
</comment>
<comment type="interaction">
    <interactant intactId="EBI-1130157">
        <id>P06136</id>
    </interactant>
    <interactant intactId="EBI-1130157">
        <id>P06136</id>
        <label>ftsQ</label>
    </interactant>
    <organismsDiffer>false</organismsDiffer>
    <experiments>6</experiments>
</comment>
<comment type="interaction">
    <interactant intactId="EBI-1130157">
        <id>P06136</id>
    </interactant>
    <interactant intactId="EBI-1214767">
        <id>P0ABG4</id>
        <label>ftsW</label>
    </interactant>
    <organismsDiffer>false</organismsDiffer>
    <experiments>4</experiments>
</comment>
<comment type="interaction">
    <interactant intactId="EBI-1130157">
        <id>P06136</id>
    </interactant>
    <interactant intactId="EBI-1214577">
        <id>P58034</id>
        <label>ymgF</label>
    </interactant>
    <organismsDiffer>false</organismsDiffer>
    <experiments>3</experiments>
</comment>
<comment type="subcellular location">
    <subcellularLocation>
        <location evidence="1 4 5 6 7 10 14 15 16">Cell inner membrane</location>
        <topology evidence="1 4 5 6 7 10 14 15 16">Single-pass type II membrane protein</topology>
    </subcellularLocation>
    <text>Localizes to the division septum. Localization requires FtsZ, FtsA, ZipA and FtsK, but not FtsL, FtsI and FtsN. Insertion into the membrane requires YidC and the Sec translocase.</text>
</comment>
<comment type="induction">
    <text evidence="13">Repressed by hydroxyurea.</text>
</comment>
<comment type="domain">
    <text evidence="9 10 11 15 16">The C-terminal periplasmic region is necessary and sufficient for septal targeting. The transmembrane region contributes to localization to the cell division site. Three periplasmic subdomains are involved in the interactions with other cell division proteins. Localization and recruitment require two separate domains.</text>
</comment>
<comment type="similarity">
    <text evidence="1">Belongs to the FtsQ/DivIB family. FtsQ subfamily.</text>
</comment>
<dbReference type="EMBL" id="M14029">
    <property type="protein sequence ID" value="AAA23673.1"/>
    <property type="molecule type" value="Genomic_DNA"/>
</dbReference>
<dbReference type="EMBL" id="K02668">
    <property type="protein sequence ID" value="AAA23816.1"/>
    <property type="molecule type" value="Genomic_DNA"/>
</dbReference>
<dbReference type="EMBL" id="X55034">
    <property type="protein sequence ID" value="CAA38870.1"/>
    <property type="molecule type" value="Genomic_DNA"/>
</dbReference>
<dbReference type="EMBL" id="U00096">
    <property type="protein sequence ID" value="AAC73204.1"/>
    <property type="molecule type" value="Genomic_DNA"/>
</dbReference>
<dbReference type="EMBL" id="AP009048">
    <property type="protein sequence ID" value="BAB96661.1"/>
    <property type="molecule type" value="Genomic_DNA"/>
</dbReference>
<dbReference type="PIR" id="S10852">
    <property type="entry name" value="CEECQ"/>
</dbReference>
<dbReference type="RefSeq" id="NP_414635.1">
    <property type="nucleotide sequence ID" value="NC_000913.3"/>
</dbReference>
<dbReference type="RefSeq" id="WP_000075748.1">
    <property type="nucleotide sequence ID" value="NZ_SSZK01000004.1"/>
</dbReference>
<dbReference type="PDB" id="2VH1">
    <property type="method" value="X-ray"/>
    <property type="resolution" value="2.70 A"/>
    <property type="chains" value="A/B=58-276"/>
</dbReference>
<dbReference type="PDB" id="4UE4">
    <property type="method" value="EM"/>
    <property type="resolution" value="7.00 A"/>
    <property type="chains" value="B=29-50"/>
</dbReference>
<dbReference type="PDB" id="4V6M">
    <property type="method" value="EM"/>
    <property type="resolution" value="7.10 A"/>
    <property type="chains" value="Z=22-103"/>
</dbReference>
<dbReference type="PDB" id="5Z2W">
    <property type="method" value="X-ray"/>
    <property type="resolution" value="3.00 A"/>
    <property type="chains" value="A=53-261"/>
</dbReference>
<dbReference type="PDB" id="6H9N">
    <property type="method" value="X-ray"/>
    <property type="resolution" value="2.60 A"/>
    <property type="chains" value="A=57-276"/>
</dbReference>
<dbReference type="PDB" id="6H9O">
    <property type="method" value="X-ray"/>
    <property type="resolution" value="2.80 A"/>
    <property type="chains" value="A/C=57-276"/>
</dbReference>
<dbReference type="PDB" id="8HHF">
    <property type="method" value="X-ray"/>
    <property type="resolution" value="3.04 A"/>
    <property type="chains" value="Q=1-276"/>
</dbReference>
<dbReference type="PDB" id="8HHG">
    <property type="method" value="X-ray"/>
    <property type="resolution" value="3.10 A"/>
    <property type="chains" value="Q=1-276"/>
</dbReference>
<dbReference type="PDB" id="8HHH">
    <property type="method" value="X-ray"/>
    <property type="resolution" value="3.30 A"/>
    <property type="chains" value="Q=1-276"/>
</dbReference>
<dbReference type="PDB" id="8Y9Y">
    <property type="method" value="EM"/>
    <property type="resolution" value="3.29 A"/>
    <property type="chains" value="B=23-47"/>
</dbReference>
<dbReference type="PDB" id="8YA2">
    <property type="method" value="EM"/>
    <property type="resolution" value="3.84 A"/>
    <property type="chains" value="B=28-47"/>
</dbReference>
<dbReference type="PDB" id="8YA3">
    <property type="method" value="EM"/>
    <property type="resolution" value="3.27 A"/>
    <property type="chains" value="B=28-47"/>
</dbReference>
<dbReference type="PDBsum" id="2VH1"/>
<dbReference type="PDBsum" id="4UE4"/>
<dbReference type="PDBsum" id="4V6M"/>
<dbReference type="PDBsum" id="5Z2W"/>
<dbReference type="PDBsum" id="6H9N"/>
<dbReference type="PDBsum" id="6H9O"/>
<dbReference type="PDBsum" id="8HHF"/>
<dbReference type="PDBsum" id="8HHG"/>
<dbReference type="PDBsum" id="8HHH"/>
<dbReference type="PDBsum" id="8Y9Y"/>
<dbReference type="PDBsum" id="8YA2"/>
<dbReference type="PDBsum" id="8YA3"/>
<dbReference type="SASBDB" id="P06136"/>
<dbReference type="SMR" id="P06136"/>
<dbReference type="BioGRID" id="4261112">
    <property type="interactions" value="337"/>
</dbReference>
<dbReference type="BioGRID" id="849224">
    <property type="interactions" value="4"/>
</dbReference>
<dbReference type="ComplexPortal" id="CPX-3099">
    <property type="entry name" value="FtsQBL complex"/>
</dbReference>
<dbReference type="DIP" id="DIP-9706N"/>
<dbReference type="FunCoup" id="P06136">
    <property type="interactions" value="128"/>
</dbReference>
<dbReference type="IntAct" id="P06136">
    <property type="interactions" value="19"/>
</dbReference>
<dbReference type="MINT" id="P06136"/>
<dbReference type="STRING" id="511145.b0093"/>
<dbReference type="jPOST" id="P06136"/>
<dbReference type="PaxDb" id="511145-b0093"/>
<dbReference type="EnsemblBacteria" id="AAC73204">
    <property type="protein sequence ID" value="AAC73204"/>
    <property type="gene ID" value="b0093"/>
</dbReference>
<dbReference type="GeneID" id="944823"/>
<dbReference type="KEGG" id="ecj:JW0091"/>
<dbReference type="KEGG" id="eco:b0093"/>
<dbReference type="KEGG" id="ecoc:C3026_00370"/>
<dbReference type="PATRIC" id="fig|1411691.4.peg.2187"/>
<dbReference type="EchoBASE" id="EB0338"/>
<dbReference type="eggNOG" id="COG1589">
    <property type="taxonomic scope" value="Bacteria"/>
</dbReference>
<dbReference type="HOGENOM" id="CLU_064041_2_1_6"/>
<dbReference type="InParanoid" id="P06136"/>
<dbReference type="OMA" id="MARIQRF"/>
<dbReference type="OrthoDB" id="9790370at2"/>
<dbReference type="PhylomeDB" id="P06136"/>
<dbReference type="BioCyc" id="EcoCyc:EG10342-MONOMER"/>
<dbReference type="EvolutionaryTrace" id="P06136"/>
<dbReference type="PRO" id="PR:P06136"/>
<dbReference type="Proteomes" id="UP000000625">
    <property type="component" value="Chromosome"/>
</dbReference>
<dbReference type="GO" id="GO:0032153">
    <property type="term" value="C:cell division site"/>
    <property type="evidence" value="ECO:0000314"/>
    <property type="project" value="EcoCyc"/>
</dbReference>
<dbReference type="GO" id="GO:1990586">
    <property type="term" value="C:divisome complex"/>
    <property type="evidence" value="ECO:0000303"/>
    <property type="project" value="ComplexPortal"/>
</dbReference>
<dbReference type="GO" id="GO:1990587">
    <property type="term" value="C:FtsQBL complex"/>
    <property type="evidence" value="ECO:0000353"/>
    <property type="project" value="ComplexPortal"/>
</dbReference>
<dbReference type="GO" id="GO:0005886">
    <property type="term" value="C:plasma membrane"/>
    <property type="evidence" value="ECO:0000314"/>
    <property type="project" value="EcoCyc"/>
</dbReference>
<dbReference type="GO" id="GO:0042802">
    <property type="term" value="F:identical protein binding"/>
    <property type="evidence" value="ECO:0000353"/>
    <property type="project" value="IntAct"/>
</dbReference>
<dbReference type="GO" id="GO:0051301">
    <property type="term" value="P:cell division"/>
    <property type="evidence" value="ECO:0000315"/>
    <property type="project" value="EcoliWiki"/>
</dbReference>
<dbReference type="GO" id="GO:0000917">
    <property type="term" value="P:division septum assembly"/>
    <property type="evidence" value="ECO:0000315"/>
    <property type="project" value="EcoliWiki"/>
</dbReference>
<dbReference type="GO" id="GO:0043093">
    <property type="term" value="P:FtsZ-dependent cytokinesis"/>
    <property type="evidence" value="ECO:0000315"/>
    <property type="project" value="EcoCyc"/>
</dbReference>
<dbReference type="FunFam" id="3.10.20.310:FF:000006">
    <property type="entry name" value="Cell division protein FtsQ"/>
    <property type="match status" value="1"/>
</dbReference>
<dbReference type="FunFam" id="3.40.50.11690:FF:000001">
    <property type="entry name" value="Cell division protein FtsQ"/>
    <property type="match status" value="1"/>
</dbReference>
<dbReference type="Gene3D" id="3.40.50.11690">
    <property type="entry name" value="Cell division protein FtsQ/DivIB"/>
    <property type="match status" value="1"/>
</dbReference>
<dbReference type="Gene3D" id="3.10.20.310">
    <property type="entry name" value="membrane protein fhac"/>
    <property type="match status" value="1"/>
</dbReference>
<dbReference type="HAMAP" id="MF_00911">
    <property type="entry name" value="FtsQ_subfam"/>
    <property type="match status" value="1"/>
</dbReference>
<dbReference type="InterPro" id="IPR005548">
    <property type="entry name" value="Cell_div_FtsQ/DivIB_C"/>
</dbReference>
<dbReference type="InterPro" id="IPR026579">
    <property type="entry name" value="FtsQ"/>
</dbReference>
<dbReference type="InterPro" id="IPR045335">
    <property type="entry name" value="FtsQ_C_sf"/>
</dbReference>
<dbReference type="InterPro" id="IPR034746">
    <property type="entry name" value="POTRA"/>
</dbReference>
<dbReference type="InterPro" id="IPR013685">
    <property type="entry name" value="POTRA_FtsQ_type"/>
</dbReference>
<dbReference type="NCBIfam" id="NF008043">
    <property type="entry name" value="PRK10775.1"/>
    <property type="match status" value="1"/>
</dbReference>
<dbReference type="PANTHER" id="PTHR35851">
    <property type="entry name" value="CELL DIVISION PROTEIN FTSQ"/>
    <property type="match status" value="1"/>
</dbReference>
<dbReference type="PANTHER" id="PTHR35851:SF1">
    <property type="entry name" value="CELL DIVISION PROTEIN FTSQ"/>
    <property type="match status" value="1"/>
</dbReference>
<dbReference type="Pfam" id="PF03799">
    <property type="entry name" value="FtsQ_DivIB_C"/>
    <property type="match status" value="1"/>
</dbReference>
<dbReference type="Pfam" id="PF08478">
    <property type="entry name" value="POTRA_1"/>
    <property type="match status" value="1"/>
</dbReference>
<dbReference type="PROSITE" id="PS51779">
    <property type="entry name" value="POTRA"/>
    <property type="match status" value="1"/>
</dbReference>
<sequence length="276" mass="31434">MSQAALNTRNSEEEVSSRRNNGTRLAGILFLLTVLTTVLVSGWVVLGWMEDAQRLPLSKLVLTGERHYTRNDDIRQSILALGEPGTFMTQDVNIIQTQIEQRLPWIKQVSVRKQWPDELKIHLVEYVPIARWNDQHMVDAEGNTFSVPPERTSKQVLPMLYGPEGSANEVLQGYREMGQMLAKDRFTLKEAAMTARRSWQLTLNNDIKLNLGRGDTMKRLARFVELYPVLQQQAQTDGKRISYVDLRYDSGAAVGWAPLPPEESTQQQNQAQAEQQ</sequence>
<keyword id="KW-0002">3D-structure</keyword>
<keyword id="KW-0131">Cell cycle</keyword>
<keyword id="KW-0132">Cell division</keyword>
<keyword id="KW-0997">Cell inner membrane</keyword>
<keyword id="KW-1003">Cell membrane</keyword>
<keyword id="KW-0472">Membrane</keyword>
<keyword id="KW-1185">Reference proteome</keyword>
<keyword id="KW-0812">Transmembrane</keyword>
<keyword id="KW-1133">Transmembrane helix</keyword>
<protein>
    <recommendedName>
        <fullName evidence="1">Cell division protein FtsQ</fullName>
    </recommendedName>
</protein>